<evidence type="ECO:0000305" key="1"/>
<keyword id="KW-0002">3D-structure</keyword>
<keyword id="KW-0687">Ribonucleoprotein</keyword>
<keyword id="KW-0689">Ribosomal protein</keyword>
<accession>Q9LCY4</accession>
<gene>
    <name type="primary">rpmC</name>
    <name type="synonym">rpl29</name>
</gene>
<name>RL29_THETH</name>
<protein>
    <recommendedName>
        <fullName evidence="1">Large ribosomal subunit protein uL29</fullName>
    </recommendedName>
    <alternativeName>
        <fullName>50S ribosomal protein L29</fullName>
    </alternativeName>
</protein>
<sequence>MRKQLEEARKLSPVELEKLVREKKRELMELRFQASIGQLSQNHKIRDLKRQIARLLTVLNEKRRQNA</sequence>
<dbReference type="EMBL" id="AJ224860">
    <property type="protein sequence ID" value="CAB76841.1"/>
    <property type="molecule type" value="Genomic_DNA"/>
</dbReference>
<dbReference type="PDB" id="4V4X">
    <property type="method" value="X-ray"/>
    <property type="resolution" value="5.00 A"/>
    <property type="chains" value="B1=1-67"/>
</dbReference>
<dbReference type="PDB" id="4V4Y">
    <property type="method" value="X-ray"/>
    <property type="resolution" value="5.50 A"/>
    <property type="chains" value="B1=1-67"/>
</dbReference>
<dbReference type="PDB" id="4V4Z">
    <property type="method" value="X-ray"/>
    <property type="resolution" value="4.51 A"/>
    <property type="chains" value="B1=1-67"/>
</dbReference>
<dbReference type="PDB" id="5A9Z">
    <property type="method" value="EM"/>
    <property type="resolution" value="4.70 A"/>
    <property type="chains" value="AY=1-67"/>
</dbReference>
<dbReference type="PDB" id="5AA0">
    <property type="method" value="EM"/>
    <property type="resolution" value="5.00 A"/>
    <property type="chains" value="AY=1-67"/>
</dbReference>
<dbReference type="PDB" id="5IMQ">
    <property type="method" value="EM"/>
    <property type="resolution" value="3.80 A"/>
    <property type="chains" value="t=1-67"/>
</dbReference>
<dbReference type="PDB" id="5IMR">
    <property type="method" value="EM"/>
    <property type="chains" value="t=1-67"/>
</dbReference>
<dbReference type="PDBsum" id="4V4X"/>
<dbReference type="PDBsum" id="4V4Y"/>
<dbReference type="PDBsum" id="4V4Z"/>
<dbReference type="PDBsum" id="5A9Z"/>
<dbReference type="PDBsum" id="5AA0"/>
<dbReference type="PDBsum" id="5IMQ"/>
<dbReference type="PDBsum" id="5IMR"/>
<dbReference type="SMR" id="Q9LCY4"/>
<dbReference type="GO" id="GO:0022625">
    <property type="term" value="C:cytosolic large ribosomal subunit"/>
    <property type="evidence" value="ECO:0007669"/>
    <property type="project" value="TreeGrafter"/>
</dbReference>
<dbReference type="GO" id="GO:0003735">
    <property type="term" value="F:structural constituent of ribosome"/>
    <property type="evidence" value="ECO:0007669"/>
    <property type="project" value="InterPro"/>
</dbReference>
<dbReference type="GO" id="GO:0006412">
    <property type="term" value="P:translation"/>
    <property type="evidence" value="ECO:0007669"/>
    <property type="project" value="UniProtKB-UniRule"/>
</dbReference>
<dbReference type="CDD" id="cd00427">
    <property type="entry name" value="Ribosomal_L29_HIP"/>
    <property type="match status" value="1"/>
</dbReference>
<dbReference type="FunFam" id="1.10.287.310:FF:000001">
    <property type="entry name" value="50S ribosomal protein L29"/>
    <property type="match status" value="1"/>
</dbReference>
<dbReference type="Gene3D" id="1.10.287.310">
    <property type="match status" value="1"/>
</dbReference>
<dbReference type="HAMAP" id="MF_00374">
    <property type="entry name" value="Ribosomal_uL29"/>
    <property type="match status" value="1"/>
</dbReference>
<dbReference type="InterPro" id="IPR050063">
    <property type="entry name" value="Ribosomal_protein_uL29"/>
</dbReference>
<dbReference type="InterPro" id="IPR001854">
    <property type="entry name" value="Ribosomal_uL29"/>
</dbReference>
<dbReference type="InterPro" id="IPR018254">
    <property type="entry name" value="Ribosomal_uL29_CS"/>
</dbReference>
<dbReference type="InterPro" id="IPR036049">
    <property type="entry name" value="Ribosomal_uL29_sf"/>
</dbReference>
<dbReference type="NCBIfam" id="TIGR00012">
    <property type="entry name" value="L29"/>
    <property type="match status" value="1"/>
</dbReference>
<dbReference type="PANTHER" id="PTHR10916">
    <property type="entry name" value="60S RIBOSOMAL PROTEIN L35/50S RIBOSOMAL PROTEIN L29"/>
    <property type="match status" value="1"/>
</dbReference>
<dbReference type="PANTHER" id="PTHR10916:SF0">
    <property type="entry name" value="LARGE RIBOSOMAL SUBUNIT PROTEIN UL29C"/>
    <property type="match status" value="1"/>
</dbReference>
<dbReference type="Pfam" id="PF00831">
    <property type="entry name" value="Ribosomal_L29"/>
    <property type="match status" value="1"/>
</dbReference>
<dbReference type="SUPFAM" id="SSF46561">
    <property type="entry name" value="Ribosomal protein L29 (L29p)"/>
    <property type="match status" value="1"/>
</dbReference>
<dbReference type="PROSITE" id="PS00579">
    <property type="entry name" value="RIBOSOMAL_L29"/>
    <property type="match status" value="1"/>
</dbReference>
<reference key="1">
    <citation type="submission" date="1998-03" db="EMBL/GenBank/DDBJ databases">
        <title>The crystallization of ribosomal proteins from the 50S subunit of the thermophilic ribosome.</title>
        <authorList>
            <person name="Rak A."/>
            <person name="Garber M.B."/>
            <person name="Vysotskaya V."/>
        </authorList>
    </citation>
    <scope>NUCLEOTIDE SEQUENCE [GENOMIC DNA]</scope>
    <source>
        <strain>VK1</strain>
    </source>
</reference>
<feature type="chain" id="PRO_0000130484" description="Large ribosomal subunit protein uL29">
    <location>
        <begin position="1"/>
        <end position="67"/>
    </location>
</feature>
<comment type="similarity">
    <text evidence="1">Belongs to the universal ribosomal protein uL29 family.</text>
</comment>
<organism>
    <name type="scientific">Thermus thermophilus</name>
    <dbReference type="NCBI Taxonomy" id="274"/>
    <lineage>
        <taxon>Bacteria</taxon>
        <taxon>Thermotogati</taxon>
        <taxon>Deinococcota</taxon>
        <taxon>Deinococci</taxon>
        <taxon>Thermales</taxon>
        <taxon>Thermaceae</taxon>
        <taxon>Thermus</taxon>
    </lineage>
</organism>
<proteinExistence type="evidence at protein level"/>